<organism>
    <name type="scientific">Bacillus cereus (strain B4264)</name>
    <dbReference type="NCBI Taxonomy" id="405532"/>
    <lineage>
        <taxon>Bacteria</taxon>
        <taxon>Bacillati</taxon>
        <taxon>Bacillota</taxon>
        <taxon>Bacilli</taxon>
        <taxon>Bacillales</taxon>
        <taxon>Bacillaceae</taxon>
        <taxon>Bacillus</taxon>
        <taxon>Bacillus cereus group</taxon>
    </lineage>
</organism>
<proteinExistence type="inferred from homology"/>
<accession>B7H673</accession>
<feature type="chain" id="PRO_1000193569" description="Gamma-glutamyl phosphate reductase">
    <location>
        <begin position="1"/>
        <end position="415"/>
    </location>
</feature>
<comment type="function">
    <text evidence="1">Catalyzes the NADPH-dependent reduction of L-glutamate 5-phosphate into L-glutamate 5-semialdehyde and phosphate. The product spontaneously undergoes cyclization to form 1-pyrroline-5-carboxylate.</text>
</comment>
<comment type="catalytic activity">
    <reaction evidence="1">
        <text>L-glutamate 5-semialdehyde + phosphate + NADP(+) = L-glutamyl 5-phosphate + NADPH + H(+)</text>
        <dbReference type="Rhea" id="RHEA:19541"/>
        <dbReference type="ChEBI" id="CHEBI:15378"/>
        <dbReference type="ChEBI" id="CHEBI:43474"/>
        <dbReference type="ChEBI" id="CHEBI:57783"/>
        <dbReference type="ChEBI" id="CHEBI:58066"/>
        <dbReference type="ChEBI" id="CHEBI:58274"/>
        <dbReference type="ChEBI" id="CHEBI:58349"/>
        <dbReference type="EC" id="1.2.1.41"/>
    </reaction>
</comment>
<comment type="pathway">
    <text evidence="1">Amino-acid biosynthesis; L-proline biosynthesis; L-glutamate 5-semialdehyde from L-glutamate: step 2/2.</text>
</comment>
<comment type="subcellular location">
    <subcellularLocation>
        <location evidence="1">Cytoplasm</location>
    </subcellularLocation>
</comment>
<comment type="similarity">
    <text evidence="1">Belongs to the gamma-glutamyl phosphate reductase family.</text>
</comment>
<dbReference type="EC" id="1.2.1.41" evidence="1"/>
<dbReference type="EMBL" id="CP001176">
    <property type="protein sequence ID" value="ACK59388.1"/>
    <property type="molecule type" value="Genomic_DNA"/>
</dbReference>
<dbReference type="RefSeq" id="WP_001006609.1">
    <property type="nucleotide sequence ID" value="NC_011725.1"/>
</dbReference>
<dbReference type="SMR" id="B7H673"/>
<dbReference type="KEGG" id="bcb:BCB4264_A2993"/>
<dbReference type="HOGENOM" id="CLU_030231_0_0_9"/>
<dbReference type="UniPathway" id="UPA00098">
    <property type="reaction ID" value="UER00360"/>
</dbReference>
<dbReference type="Proteomes" id="UP000007096">
    <property type="component" value="Chromosome"/>
</dbReference>
<dbReference type="GO" id="GO:0005737">
    <property type="term" value="C:cytoplasm"/>
    <property type="evidence" value="ECO:0007669"/>
    <property type="project" value="UniProtKB-SubCell"/>
</dbReference>
<dbReference type="GO" id="GO:0004350">
    <property type="term" value="F:glutamate-5-semialdehyde dehydrogenase activity"/>
    <property type="evidence" value="ECO:0007669"/>
    <property type="project" value="UniProtKB-UniRule"/>
</dbReference>
<dbReference type="GO" id="GO:0050661">
    <property type="term" value="F:NADP binding"/>
    <property type="evidence" value="ECO:0007669"/>
    <property type="project" value="InterPro"/>
</dbReference>
<dbReference type="GO" id="GO:0055129">
    <property type="term" value="P:L-proline biosynthetic process"/>
    <property type="evidence" value="ECO:0007669"/>
    <property type="project" value="UniProtKB-UniRule"/>
</dbReference>
<dbReference type="CDD" id="cd07079">
    <property type="entry name" value="ALDH_F18-19_ProA-GPR"/>
    <property type="match status" value="1"/>
</dbReference>
<dbReference type="FunFam" id="3.40.309.10:FF:000006">
    <property type="entry name" value="Gamma-glutamyl phosphate reductase"/>
    <property type="match status" value="1"/>
</dbReference>
<dbReference type="Gene3D" id="3.40.605.10">
    <property type="entry name" value="Aldehyde Dehydrogenase, Chain A, domain 1"/>
    <property type="match status" value="1"/>
</dbReference>
<dbReference type="Gene3D" id="3.40.309.10">
    <property type="entry name" value="Aldehyde Dehydrogenase, Chain A, domain 2"/>
    <property type="match status" value="1"/>
</dbReference>
<dbReference type="HAMAP" id="MF_00412">
    <property type="entry name" value="ProA"/>
    <property type="match status" value="1"/>
</dbReference>
<dbReference type="InterPro" id="IPR016161">
    <property type="entry name" value="Ald_DH/histidinol_DH"/>
</dbReference>
<dbReference type="InterPro" id="IPR016163">
    <property type="entry name" value="Ald_DH_C"/>
</dbReference>
<dbReference type="InterPro" id="IPR016162">
    <property type="entry name" value="Ald_DH_N"/>
</dbReference>
<dbReference type="InterPro" id="IPR015590">
    <property type="entry name" value="Aldehyde_DH_dom"/>
</dbReference>
<dbReference type="InterPro" id="IPR020593">
    <property type="entry name" value="G-glutamylP_reductase_CS"/>
</dbReference>
<dbReference type="InterPro" id="IPR012134">
    <property type="entry name" value="Glu-5-SA_DH"/>
</dbReference>
<dbReference type="InterPro" id="IPR000965">
    <property type="entry name" value="GPR_dom"/>
</dbReference>
<dbReference type="NCBIfam" id="NF001221">
    <property type="entry name" value="PRK00197.1"/>
    <property type="match status" value="1"/>
</dbReference>
<dbReference type="NCBIfam" id="TIGR00407">
    <property type="entry name" value="proA"/>
    <property type="match status" value="1"/>
</dbReference>
<dbReference type="PANTHER" id="PTHR11063:SF8">
    <property type="entry name" value="DELTA-1-PYRROLINE-5-CARBOXYLATE SYNTHASE"/>
    <property type="match status" value="1"/>
</dbReference>
<dbReference type="PANTHER" id="PTHR11063">
    <property type="entry name" value="GLUTAMATE SEMIALDEHYDE DEHYDROGENASE"/>
    <property type="match status" value="1"/>
</dbReference>
<dbReference type="Pfam" id="PF00171">
    <property type="entry name" value="Aldedh"/>
    <property type="match status" value="1"/>
</dbReference>
<dbReference type="PIRSF" id="PIRSF000151">
    <property type="entry name" value="GPR"/>
    <property type="match status" value="1"/>
</dbReference>
<dbReference type="SUPFAM" id="SSF53720">
    <property type="entry name" value="ALDH-like"/>
    <property type="match status" value="1"/>
</dbReference>
<dbReference type="PROSITE" id="PS01223">
    <property type="entry name" value="PROA"/>
    <property type="match status" value="1"/>
</dbReference>
<sequence length="415" mass="45633">MNEVLAKGIKAKEVARELVLKSTEQKNEALSAIADQLILETAYILEENKRDIEEGKAKGFSDSLLDRLLLTENRIIDMTEGIKQLIELRDPVGECVSAWERPNGLSIQEMRVPLGVIGMIYEARPNVTVDAATICLKTGNAVILRGSSSAIHSNKAIVAVIHRALKLTSLPQESVQLIEDTTRNSAKQLFTMKDYLDVLIPRGGKQLIDTVVREASVPVLETGAGNCHIFIDETADKQMAFNIIINAKTQRPSVCNAIETIVLHENWAEQYGSELFSSLKERGVELRGDNKAVAIDSSILLATEEDWETEFLSLTLAVKVVSTVEEAIHHINTYGSMHSEAIITENEENVSKFFTSVDAAALYHNASTRFTDGSEFGFGAEIGISTQKLHVRGPMGLPALTSTKYVIRGNGQIRK</sequence>
<gene>
    <name evidence="1" type="primary">proA</name>
    <name type="ordered locus">BCB4264_A2993</name>
</gene>
<keyword id="KW-0028">Amino-acid biosynthesis</keyword>
<keyword id="KW-0963">Cytoplasm</keyword>
<keyword id="KW-0521">NADP</keyword>
<keyword id="KW-0560">Oxidoreductase</keyword>
<keyword id="KW-0641">Proline biosynthesis</keyword>
<evidence type="ECO:0000255" key="1">
    <source>
        <dbReference type="HAMAP-Rule" id="MF_00412"/>
    </source>
</evidence>
<reference key="1">
    <citation type="submission" date="2008-10" db="EMBL/GenBank/DDBJ databases">
        <title>Genome sequence of Bacillus cereus B4264.</title>
        <authorList>
            <person name="Dodson R.J."/>
            <person name="Durkin A.S."/>
            <person name="Rosovitz M.J."/>
            <person name="Rasko D.A."/>
            <person name="Hoffmaster A."/>
            <person name="Ravel J."/>
            <person name="Sutton G."/>
        </authorList>
    </citation>
    <scope>NUCLEOTIDE SEQUENCE [LARGE SCALE GENOMIC DNA]</scope>
    <source>
        <strain>B4264</strain>
    </source>
</reference>
<name>PROA_BACC4</name>
<protein>
    <recommendedName>
        <fullName evidence="1">Gamma-glutamyl phosphate reductase</fullName>
        <shortName evidence="1">GPR</shortName>
        <ecNumber evidence="1">1.2.1.41</ecNumber>
    </recommendedName>
    <alternativeName>
        <fullName evidence="1">Glutamate-5-semialdehyde dehydrogenase</fullName>
    </alternativeName>
    <alternativeName>
        <fullName evidence="1">Glutamyl-gamma-semialdehyde dehydrogenase</fullName>
        <shortName evidence="1">GSA dehydrogenase</shortName>
    </alternativeName>
</protein>